<reference evidence="5" key="1">
    <citation type="journal article" date="1998" name="Science">
        <title>Genome sequence of the nematode C. elegans: a platform for investigating biology.</title>
        <authorList>
            <consortium name="The C. elegans sequencing consortium"/>
        </authorList>
    </citation>
    <scope>NUCLEOTIDE SEQUENCE [LARGE SCALE GENOMIC DNA]</scope>
    <source>
        <strain evidence="5">Bristol N2</strain>
    </source>
</reference>
<reference evidence="4" key="2">
    <citation type="journal article" date="2009" name="EMBO J.">
        <title>An ER-resident membrane protein complex regulates nicotinic acetylcholine receptor subunit composition at the synapse.</title>
        <authorList>
            <person name="Almedom R.B."/>
            <person name="Liewald J.F."/>
            <person name="Hernando G."/>
            <person name="Schultheis C."/>
            <person name="Rayes D."/>
            <person name="Pan J."/>
            <person name="Schedletzky T."/>
            <person name="Hutter H."/>
            <person name="Bouzat C."/>
            <person name="Gottschalk A."/>
        </authorList>
    </citation>
    <scope>FUNCTION</scope>
    <scope>INTERACTION WITH NRA-2</scope>
    <scope>SUBCELLULAR LOCATION</scope>
    <scope>TISSUE SPECIFICITY</scope>
    <scope>DEVELOPMENTAL STAGE</scope>
    <scope>MUTAGENESIS OF 822-SER--ILE-922</scope>
</reference>
<gene>
    <name evidence="3 7" type="primary">nra-4</name>
    <name evidence="7" type="ORF">C02E11.1</name>
</gene>
<dbReference type="EMBL" id="BX284605">
    <property type="protein sequence ID" value="CCD62613.1"/>
    <property type="molecule type" value="Genomic_DNA"/>
</dbReference>
<dbReference type="EMBL" id="BX284605">
    <property type="protein sequence ID" value="CCD62614.1"/>
    <property type="molecule type" value="Genomic_DNA"/>
</dbReference>
<dbReference type="PIR" id="T33764">
    <property type="entry name" value="T33764"/>
</dbReference>
<dbReference type="RefSeq" id="NP_503367.1">
    <molecule id="H2KYE0-2"/>
    <property type="nucleotide sequence ID" value="NM_070966.4"/>
</dbReference>
<dbReference type="RefSeq" id="NP_872191.1">
    <molecule id="H2KYE0-1"/>
    <property type="nucleotide sequence ID" value="NM_182391.2"/>
</dbReference>
<dbReference type="FunCoup" id="H2KYE0">
    <property type="interactions" value="2417"/>
</dbReference>
<dbReference type="STRING" id="6239.C02E11.1b.1"/>
<dbReference type="PaxDb" id="6239-C02E11.1b"/>
<dbReference type="PeptideAtlas" id="H2KYE0"/>
<dbReference type="EnsemblMetazoa" id="C02E11.1a.1">
    <molecule id="H2KYE0-2"/>
    <property type="protein sequence ID" value="C02E11.1a.1"/>
    <property type="gene ID" value="WBGene00015344"/>
</dbReference>
<dbReference type="EnsemblMetazoa" id="C02E11.1b.1">
    <molecule id="H2KYE0-1"/>
    <property type="protein sequence ID" value="C02E11.1b.1"/>
    <property type="gene ID" value="WBGene00015344"/>
</dbReference>
<dbReference type="GeneID" id="3565008"/>
<dbReference type="KEGG" id="cel:CELE_C02E11.1"/>
<dbReference type="UCSC" id="C02E11.1a.1">
    <property type="organism name" value="c. elegans"/>
</dbReference>
<dbReference type="AGR" id="WB:WBGene00015344"/>
<dbReference type="CTD" id="3565008"/>
<dbReference type="WormBase" id="C02E11.1a">
    <molecule id="H2KYE0-2"/>
    <property type="protein sequence ID" value="CE28528"/>
    <property type="gene ID" value="WBGene00015344"/>
    <property type="gene designation" value="nra-4"/>
</dbReference>
<dbReference type="WormBase" id="C02E11.1b">
    <molecule id="H2KYE0-1"/>
    <property type="protein sequence ID" value="CE32040"/>
    <property type="gene ID" value="WBGene00015344"/>
    <property type="gene designation" value="nra-4"/>
</dbReference>
<dbReference type="eggNOG" id="KOG1948">
    <property type="taxonomic scope" value="Eukaryota"/>
</dbReference>
<dbReference type="GeneTree" id="ENSGT00390000000089"/>
<dbReference type="HOGENOM" id="CLU_007543_2_0_1"/>
<dbReference type="InParanoid" id="H2KYE0"/>
<dbReference type="OMA" id="FVFKGFG"/>
<dbReference type="OrthoDB" id="10263633at2759"/>
<dbReference type="PhylomeDB" id="H2KYE0"/>
<dbReference type="PRO" id="PR:H2KYE0"/>
<dbReference type="Proteomes" id="UP000001940">
    <property type="component" value="Chromosome V"/>
</dbReference>
<dbReference type="Bgee" id="WBGene00015344">
    <property type="expression patterns" value="Expressed in pharyngeal muscle cell (C elegans) and 4 other cell types or tissues"/>
</dbReference>
<dbReference type="GO" id="GO:0005783">
    <property type="term" value="C:endoplasmic reticulum"/>
    <property type="evidence" value="ECO:0000314"/>
    <property type="project" value="WormBase"/>
</dbReference>
<dbReference type="GO" id="GO:0005789">
    <property type="term" value="C:endoplasmic reticulum membrane"/>
    <property type="evidence" value="ECO:0000318"/>
    <property type="project" value="GO_Central"/>
</dbReference>
<dbReference type="GO" id="GO:0065003">
    <property type="term" value="P:protein-containing complex assembly"/>
    <property type="evidence" value="ECO:0000315"/>
    <property type="project" value="UniProtKB"/>
</dbReference>
<dbReference type="InterPro" id="IPR055075">
    <property type="entry name" value="NOMO-like_N"/>
</dbReference>
<dbReference type="InterPro" id="IPR055073">
    <property type="entry name" value="NOMO1-like_9th"/>
</dbReference>
<dbReference type="InterPro" id="IPR056319">
    <property type="entry name" value="NOMO_7th"/>
</dbReference>
<dbReference type="InterPro" id="IPR051417">
    <property type="entry name" value="SDr/BOS_complex"/>
</dbReference>
<dbReference type="PANTHER" id="PTHR23303:SF14">
    <property type="entry name" value="BOS COMPLEX SUBUNIT NOMO1-RELATED"/>
    <property type="match status" value="1"/>
</dbReference>
<dbReference type="PANTHER" id="PTHR23303">
    <property type="entry name" value="CARBOXYPEPTIDASE REGULATORY REGION-CONTAINING"/>
    <property type="match status" value="1"/>
</dbReference>
<dbReference type="Pfam" id="PF23141">
    <property type="entry name" value="Ig_NOMO"/>
    <property type="match status" value="1"/>
</dbReference>
<dbReference type="Pfam" id="PF22898">
    <property type="entry name" value="NOMO1-like_1st"/>
    <property type="match status" value="1"/>
</dbReference>
<dbReference type="Pfam" id="PF22902">
    <property type="entry name" value="NOMO1-like_9th"/>
    <property type="match status" value="1"/>
</dbReference>
<organism evidence="5">
    <name type="scientific">Caenorhabditis elegans</name>
    <dbReference type="NCBI Taxonomy" id="6239"/>
    <lineage>
        <taxon>Eukaryota</taxon>
        <taxon>Metazoa</taxon>
        <taxon>Ecdysozoa</taxon>
        <taxon>Nematoda</taxon>
        <taxon>Chromadorea</taxon>
        <taxon>Rhabditida</taxon>
        <taxon>Rhabditina</taxon>
        <taxon>Rhabditomorpha</taxon>
        <taxon>Rhabditoidea</taxon>
        <taxon>Rhabditidae</taxon>
        <taxon>Peloderinae</taxon>
        <taxon>Caenorhabditis</taxon>
    </lineage>
</organism>
<feature type="signal peptide" evidence="1">
    <location>
        <begin position="1"/>
        <end position="18"/>
    </location>
</feature>
<feature type="chain" id="PRO_5003564292" description="Nicotinic receptor-associated protein 4" evidence="1">
    <location>
        <begin position="19"/>
        <end position="1123"/>
    </location>
</feature>
<feature type="topological domain" description="Lumenal" evidence="4">
    <location>
        <begin position="19"/>
        <end position="1071"/>
    </location>
</feature>
<feature type="transmembrane region" description="Helical" evidence="1">
    <location>
        <begin position="1072"/>
        <end position="1092"/>
    </location>
</feature>
<feature type="topological domain" description="Cytoplasmic" evidence="4">
    <location>
        <begin position="1093"/>
        <end position="1123"/>
    </location>
</feature>
<feature type="splice variant" id="VSP_060398" description="In isoform a." evidence="4">
    <location>
        <begin position="40"/>
        <end position="41"/>
    </location>
</feature>
<feature type="mutagenesis site" description="In tm2656; no resistance to levamisole or nicotine-induced paralysis. No defect in levamisole or nicotine-induced postsynaptic currents in muscles." evidence="2">
    <location>
        <begin position="822"/>
        <end position="922"/>
    </location>
</feature>
<sequence length="1123" mass="121901">MGSLPLILLSLLLPGALANVYSCAGSVKSTSPVDYSQLKLQVRLLTLEGHMKHEEEVNPSNGYFMIPVYNKGHYTLKVSAPAGYYFEPDSIEIKIDGKTDACSLNEDLVFHLTGFSVRGTVDGAAAGLPLVLTENGKQIAETKTEDGGKYEMRAPPGKYEVSTGAGASECISKGKTSVEVKNAPVVVTPNFKISGYQLEVHTRTESMNPFVDAVMTLYATSSIDLPNIKCVGSEGSLNVPSTHNVKCSIGKTDPRGRLSVACVPSGEYYLAASHVNGPKSINFSPNPQKVVVSQAASEARFVAQSATGRVRVTSKDLPLSGVEVLVNEKSGGKTDSQGYLKIENLKEDEHTTITAKAPNTQFSTVHANVKFPKVEIQDVTVQKFDICGQVEKSENGVLGKLTFTRKDDKRSLEIQPKADGSFCQPVSPGLFTIEPTDKTSSLTPRLLEVEVLKNAVTNLRFTHFKTNANVHLSCIGACPTATVSLFLPGQTLVRSVKGTDVFTFENIGPGTYSARLDDNGRGCWEKSEMTLVVEQSNTQPTIHFKQNGFAAQIEISHPAEIEWSNADKKQLNGKTSTKGGEVISICVPTSGVYDVSLGSCYKFERQQFKLTVPFDGVHKEKAVAARISGTIDLENDKNAAVSIRIKSSAGDREIQVPALDNGRFTFEEPLASSGEQLVIVPSSKLRLFEPTSKSVTVTGKCIENAVKFNSFRGIFLDGSIKPAVEKAVVKAVLKKDKDVVIEAISNKDGAFKIGPVKRVEDYDITATLDGFKFTPTSTPGHFQSVKLSQLSIKVVDEVTNAPLDGVLLSLVGGKGAGSDYRSNNVLDETAHKNYVALAPGEYFVRAILQEYKFSPSTSTIVVKEGQHENVVLKGKRVSFSAYGKMREMSGDAMKDVIIEALSEGCDLHQSEATTKEDGTYRIRGLLPDCEYQVHAKSYADGSPAPHSFPRSFTVSMTAEDVKGLEFMATITAKTTDIAVEIGMDTLPEIQSVRVVITKNNNDHVQVASVVAPQHLHYLVNLPRDGVEYAIRVEAEKPPQAFAAKTVRVVADQAMKVARVPLTSSKRANDVDISVGTFLSLPFFVTLALVFFNQNRVLELLGTFIDWARNTFAPTADNHHRKRK</sequence>
<proteinExistence type="evidence at protein level"/>
<accession>H2KYE0</accession>
<accession>Q9UAN9</accession>
<evidence type="ECO:0000255" key="1"/>
<evidence type="ECO:0000269" key="2">
    <source>
    </source>
</evidence>
<evidence type="ECO:0000303" key="3">
    <source>
    </source>
</evidence>
<evidence type="ECO:0000305" key="4"/>
<evidence type="ECO:0000312" key="5">
    <source>
        <dbReference type="Proteomes" id="UP000001940"/>
    </source>
</evidence>
<evidence type="ECO:0000312" key="6">
    <source>
        <dbReference type="WormBase" id="C02E11.1a"/>
    </source>
</evidence>
<evidence type="ECO:0000312" key="7">
    <source>
        <dbReference type="WormBase" id="C02E11.1b"/>
    </source>
</evidence>
<comment type="function">
    <text evidence="2">Involved in the recognition and selection of protein complexes to exit the endoplasmic reticulum (ER) (PubMed:19609303). In muscles, regulates levamisole-sensitive nicotinic acetylcholine receptor (L-AChR) subunit composition, possibly by allowing only specific L-AChR subunit combinations to exit the ER (PubMed:19609303). Specifically, may promote the inclusion of alpha subunit unc-38 into and the exclusion of unc-29 from L-AChR (PubMed:19609303). Regulates L-AChR sensitivity to agonists such as nicotine and levamisole at neuro-muscular junctions (PubMed:19609303).</text>
</comment>
<comment type="subunit">
    <text evidence="2">May interact with nra-2 in the ER.</text>
</comment>
<comment type="subcellular location">
    <subcellularLocation>
        <location evidence="2">Endoplasmic reticulum membrane</location>
        <topology evidence="1">Single-pass type I membrane protein</topology>
    </subcellularLocation>
</comment>
<comment type="alternative products">
    <event type="alternative splicing"/>
    <isoform>
        <id>H2KYE0-1</id>
        <name evidence="7">b</name>
        <sequence type="displayed"/>
    </isoform>
    <isoform>
        <id>H2KYE0-2</id>
        <name evidence="6">a</name>
        <sequence type="described" ref="VSP_060398"/>
    </isoform>
</comment>
<comment type="tissue specificity">
    <text evidence="2">Expressed in body wall, pharyngeal, uterine and vulval muscles, motor neurons, nerve ring, motor and ventral cord neurons, hypodermal cells in the tail, vulval epithelium and intestine.</text>
</comment>
<comment type="developmental stage">
    <text evidence="2">Expressed in embryos and adults.</text>
</comment>
<protein>
    <recommendedName>
        <fullName evidence="3">Nicotinic receptor-associated protein 4</fullName>
    </recommendedName>
</protein>
<name>NRA4_CAEEL</name>
<keyword id="KW-0025">Alternative splicing</keyword>
<keyword id="KW-0256">Endoplasmic reticulum</keyword>
<keyword id="KW-0472">Membrane</keyword>
<keyword id="KW-1185">Reference proteome</keyword>
<keyword id="KW-0732">Signal</keyword>
<keyword id="KW-0812">Transmembrane</keyword>
<keyword id="KW-1133">Transmembrane helix</keyword>